<comment type="function">
    <text evidence="1">Binds together with bS18 to 16S ribosomal RNA.</text>
</comment>
<comment type="similarity">
    <text evidence="1">Belongs to the bacterial ribosomal protein bS6 family.</text>
</comment>
<feature type="chain" id="PRO_1000059854" description="Small ribosomal subunit protein bS6">
    <location>
        <begin position="1"/>
        <end position="95"/>
    </location>
</feature>
<gene>
    <name evidence="1" type="primary">rpsF</name>
    <name type="ordered locus">BPUM_3720</name>
</gene>
<organism>
    <name type="scientific">Bacillus pumilus (strain SAFR-032)</name>
    <dbReference type="NCBI Taxonomy" id="315750"/>
    <lineage>
        <taxon>Bacteria</taxon>
        <taxon>Bacillati</taxon>
        <taxon>Bacillota</taxon>
        <taxon>Bacilli</taxon>
        <taxon>Bacillales</taxon>
        <taxon>Bacillaceae</taxon>
        <taxon>Bacillus</taxon>
    </lineage>
</organism>
<protein>
    <recommendedName>
        <fullName evidence="1">Small ribosomal subunit protein bS6</fullName>
    </recommendedName>
    <alternativeName>
        <fullName evidence="2">30S ribosomal protein S6</fullName>
    </alternativeName>
</protein>
<dbReference type="EMBL" id="CP000813">
    <property type="protein sequence ID" value="ABV64364.1"/>
    <property type="molecule type" value="Genomic_DNA"/>
</dbReference>
<dbReference type="RefSeq" id="WP_003215073.1">
    <property type="nucleotide sequence ID" value="NZ_VEIS01000021.1"/>
</dbReference>
<dbReference type="SMR" id="A8FJE7"/>
<dbReference type="STRING" id="315750.BPUM_3720"/>
<dbReference type="GeneID" id="5623013"/>
<dbReference type="KEGG" id="bpu:BPUM_3720"/>
<dbReference type="eggNOG" id="COG0360">
    <property type="taxonomic scope" value="Bacteria"/>
</dbReference>
<dbReference type="HOGENOM" id="CLU_113441_5_3_9"/>
<dbReference type="OrthoDB" id="9812702at2"/>
<dbReference type="Proteomes" id="UP000001355">
    <property type="component" value="Chromosome"/>
</dbReference>
<dbReference type="GO" id="GO:0005737">
    <property type="term" value="C:cytoplasm"/>
    <property type="evidence" value="ECO:0007669"/>
    <property type="project" value="UniProtKB-ARBA"/>
</dbReference>
<dbReference type="GO" id="GO:1990904">
    <property type="term" value="C:ribonucleoprotein complex"/>
    <property type="evidence" value="ECO:0007669"/>
    <property type="project" value="UniProtKB-KW"/>
</dbReference>
<dbReference type="GO" id="GO:0005840">
    <property type="term" value="C:ribosome"/>
    <property type="evidence" value="ECO:0007669"/>
    <property type="project" value="UniProtKB-KW"/>
</dbReference>
<dbReference type="GO" id="GO:0070181">
    <property type="term" value="F:small ribosomal subunit rRNA binding"/>
    <property type="evidence" value="ECO:0007669"/>
    <property type="project" value="TreeGrafter"/>
</dbReference>
<dbReference type="GO" id="GO:0003735">
    <property type="term" value="F:structural constituent of ribosome"/>
    <property type="evidence" value="ECO:0007669"/>
    <property type="project" value="InterPro"/>
</dbReference>
<dbReference type="GO" id="GO:0006412">
    <property type="term" value="P:translation"/>
    <property type="evidence" value="ECO:0007669"/>
    <property type="project" value="UniProtKB-UniRule"/>
</dbReference>
<dbReference type="CDD" id="cd00473">
    <property type="entry name" value="bS6"/>
    <property type="match status" value="1"/>
</dbReference>
<dbReference type="FunFam" id="3.30.70.60:FF:000002">
    <property type="entry name" value="30S ribosomal protein S6"/>
    <property type="match status" value="1"/>
</dbReference>
<dbReference type="Gene3D" id="3.30.70.60">
    <property type="match status" value="1"/>
</dbReference>
<dbReference type="HAMAP" id="MF_00360">
    <property type="entry name" value="Ribosomal_bS6"/>
    <property type="match status" value="1"/>
</dbReference>
<dbReference type="InterPro" id="IPR000529">
    <property type="entry name" value="Ribosomal_bS6"/>
</dbReference>
<dbReference type="InterPro" id="IPR020815">
    <property type="entry name" value="Ribosomal_bS6_CS"/>
</dbReference>
<dbReference type="InterPro" id="IPR035980">
    <property type="entry name" value="Ribosomal_bS6_sf"/>
</dbReference>
<dbReference type="InterPro" id="IPR020814">
    <property type="entry name" value="Ribosomal_S6_plastid/chlpt"/>
</dbReference>
<dbReference type="InterPro" id="IPR014717">
    <property type="entry name" value="Transl_elong_EF1B/ribsomal_bS6"/>
</dbReference>
<dbReference type="NCBIfam" id="TIGR00166">
    <property type="entry name" value="S6"/>
    <property type="match status" value="1"/>
</dbReference>
<dbReference type="PANTHER" id="PTHR21011">
    <property type="entry name" value="MITOCHONDRIAL 28S RIBOSOMAL PROTEIN S6"/>
    <property type="match status" value="1"/>
</dbReference>
<dbReference type="PANTHER" id="PTHR21011:SF1">
    <property type="entry name" value="SMALL RIBOSOMAL SUBUNIT PROTEIN BS6M"/>
    <property type="match status" value="1"/>
</dbReference>
<dbReference type="Pfam" id="PF01250">
    <property type="entry name" value="Ribosomal_S6"/>
    <property type="match status" value="1"/>
</dbReference>
<dbReference type="SUPFAM" id="SSF54995">
    <property type="entry name" value="Ribosomal protein S6"/>
    <property type="match status" value="1"/>
</dbReference>
<dbReference type="PROSITE" id="PS01048">
    <property type="entry name" value="RIBOSOMAL_S6"/>
    <property type="match status" value="1"/>
</dbReference>
<proteinExistence type="inferred from homology"/>
<keyword id="KW-0687">Ribonucleoprotein</keyword>
<keyword id="KW-0689">Ribosomal protein</keyword>
<keyword id="KW-0694">RNA-binding</keyword>
<keyword id="KW-0699">rRNA-binding</keyword>
<sequence length="95" mass="11052">MRKYEVMYIIRPTVDDEAKKAVIERFNNVLTSNGAEITGTKDWGKRRLAYEINDFREGFYQIVNVQSDAAAVQEFDRLAKISDDIIRHIVVKEEV</sequence>
<name>RS6_BACP2</name>
<accession>A8FJE7</accession>
<evidence type="ECO:0000255" key="1">
    <source>
        <dbReference type="HAMAP-Rule" id="MF_00360"/>
    </source>
</evidence>
<evidence type="ECO:0000305" key="2"/>
<reference key="1">
    <citation type="journal article" date="2007" name="PLoS ONE">
        <title>Paradoxical DNA repair and peroxide resistance gene conservation in Bacillus pumilus SAFR-032.</title>
        <authorList>
            <person name="Gioia J."/>
            <person name="Yerrapragada S."/>
            <person name="Qin X."/>
            <person name="Jiang H."/>
            <person name="Igboeli O.C."/>
            <person name="Muzny D."/>
            <person name="Dugan-Rocha S."/>
            <person name="Ding Y."/>
            <person name="Hawes A."/>
            <person name="Liu W."/>
            <person name="Perez L."/>
            <person name="Kovar C."/>
            <person name="Dinh H."/>
            <person name="Lee S."/>
            <person name="Nazareth L."/>
            <person name="Blyth P."/>
            <person name="Holder M."/>
            <person name="Buhay C."/>
            <person name="Tirumalai M.R."/>
            <person name="Liu Y."/>
            <person name="Dasgupta I."/>
            <person name="Bokhetache L."/>
            <person name="Fujita M."/>
            <person name="Karouia F."/>
            <person name="Eswara Moorthy P."/>
            <person name="Siefert J."/>
            <person name="Uzman A."/>
            <person name="Buzumbo P."/>
            <person name="Verma A."/>
            <person name="Zwiya H."/>
            <person name="McWilliams B.D."/>
            <person name="Olowu A."/>
            <person name="Clinkenbeard K.D."/>
            <person name="Newcombe D."/>
            <person name="Golebiewski L."/>
            <person name="Petrosino J.F."/>
            <person name="Nicholson W.L."/>
            <person name="Fox G.E."/>
            <person name="Venkateswaran K."/>
            <person name="Highlander S.K."/>
            <person name="Weinstock G.M."/>
        </authorList>
    </citation>
    <scope>NUCLEOTIDE SEQUENCE [LARGE SCALE GENOMIC DNA]</scope>
    <source>
        <strain>SAFR-032</strain>
    </source>
</reference>